<accession>Q9PEM6</accession>
<protein>
    <recommendedName>
        <fullName evidence="1">N-acetyl-gamma-glutamyl-phosphate reductase</fullName>
        <shortName evidence="1">AGPR</shortName>
        <ecNumber evidence="1">1.2.1.38</ecNumber>
    </recommendedName>
    <alternativeName>
        <fullName evidence="1">N-acetyl-glutamate semialdehyde dehydrogenase</fullName>
        <shortName evidence="1">NAGSA dehydrogenase</shortName>
    </alternativeName>
</protein>
<organism>
    <name type="scientific">Xylella fastidiosa (strain 9a5c)</name>
    <dbReference type="NCBI Taxonomy" id="160492"/>
    <lineage>
        <taxon>Bacteria</taxon>
        <taxon>Pseudomonadati</taxon>
        <taxon>Pseudomonadota</taxon>
        <taxon>Gammaproteobacteria</taxon>
        <taxon>Lysobacterales</taxon>
        <taxon>Lysobacteraceae</taxon>
        <taxon>Xylella</taxon>
    </lineage>
</organism>
<gene>
    <name evidence="1" type="primary">argC</name>
    <name type="ordered locus">XF_1002</name>
</gene>
<dbReference type="EC" id="1.2.1.38" evidence="1"/>
<dbReference type="EMBL" id="AE003849">
    <property type="protein sequence ID" value="AAF83812.1"/>
    <property type="molecule type" value="Genomic_DNA"/>
</dbReference>
<dbReference type="PIR" id="A82735">
    <property type="entry name" value="A82735"/>
</dbReference>
<dbReference type="RefSeq" id="WP_010893521.1">
    <property type="nucleotide sequence ID" value="NC_002488.3"/>
</dbReference>
<dbReference type="SMR" id="Q9PEM6"/>
<dbReference type="STRING" id="160492.XF_1002"/>
<dbReference type="KEGG" id="xfa:XF_1002"/>
<dbReference type="PATRIC" id="fig|160492.11.peg.1072"/>
<dbReference type="eggNOG" id="COG0002">
    <property type="taxonomic scope" value="Bacteria"/>
</dbReference>
<dbReference type="HOGENOM" id="CLU_006384_3_0_6"/>
<dbReference type="UniPathway" id="UPA00068">
    <property type="reaction ID" value="UER00108"/>
</dbReference>
<dbReference type="Proteomes" id="UP000000812">
    <property type="component" value="Chromosome"/>
</dbReference>
<dbReference type="GO" id="GO:0005737">
    <property type="term" value="C:cytoplasm"/>
    <property type="evidence" value="ECO:0007669"/>
    <property type="project" value="UniProtKB-SubCell"/>
</dbReference>
<dbReference type="GO" id="GO:0003942">
    <property type="term" value="F:N-acetyl-gamma-glutamyl-phosphate reductase activity"/>
    <property type="evidence" value="ECO:0007669"/>
    <property type="project" value="UniProtKB-UniRule"/>
</dbReference>
<dbReference type="GO" id="GO:0051287">
    <property type="term" value="F:NAD binding"/>
    <property type="evidence" value="ECO:0007669"/>
    <property type="project" value="InterPro"/>
</dbReference>
<dbReference type="GO" id="GO:0070401">
    <property type="term" value="F:NADP+ binding"/>
    <property type="evidence" value="ECO:0007669"/>
    <property type="project" value="InterPro"/>
</dbReference>
<dbReference type="GO" id="GO:0006526">
    <property type="term" value="P:L-arginine biosynthetic process"/>
    <property type="evidence" value="ECO:0007669"/>
    <property type="project" value="UniProtKB-UniRule"/>
</dbReference>
<dbReference type="CDD" id="cd23936">
    <property type="entry name" value="AGPR_C_ARG5_6_like"/>
    <property type="match status" value="1"/>
</dbReference>
<dbReference type="CDD" id="cd24149">
    <property type="entry name" value="AGPR_N_ARG5_6_like"/>
    <property type="match status" value="1"/>
</dbReference>
<dbReference type="Gene3D" id="3.30.360.10">
    <property type="entry name" value="Dihydrodipicolinate Reductase, domain 2"/>
    <property type="match status" value="1"/>
</dbReference>
<dbReference type="Gene3D" id="3.40.50.720">
    <property type="entry name" value="NAD(P)-binding Rossmann-like Domain"/>
    <property type="match status" value="1"/>
</dbReference>
<dbReference type="HAMAP" id="MF_00150">
    <property type="entry name" value="ArgC_type1"/>
    <property type="match status" value="1"/>
</dbReference>
<dbReference type="InterPro" id="IPR023013">
    <property type="entry name" value="AGPR_AS"/>
</dbReference>
<dbReference type="InterPro" id="IPR000706">
    <property type="entry name" value="AGPR_type-1"/>
</dbReference>
<dbReference type="InterPro" id="IPR036291">
    <property type="entry name" value="NAD(P)-bd_dom_sf"/>
</dbReference>
<dbReference type="InterPro" id="IPR050085">
    <property type="entry name" value="NAGSA_dehydrogenase"/>
</dbReference>
<dbReference type="InterPro" id="IPR000534">
    <property type="entry name" value="Semialdehyde_DH_NAD-bd"/>
</dbReference>
<dbReference type="NCBIfam" id="TIGR01850">
    <property type="entry name" value="argC"/>
    <property type="match status" value="1"/>
</dbReference>
<dbReference type="PANTHER" id="PTHR32338:SF10">
    <property type="entry name" value="N-ACETYL-GAMMA-GLUTAMYL-PHOSPHATE REDUCTASE, CHLOROPLASTIC-RELATED"/>
    <property type="match status" value="1"/>
</dbReference>
<dbReference type="PANTHER" id="PTHR32338">
    <property type="entry name" value="N-ACETYL-GAMMA-GLUTAMYL-PHOSPHATE REDUCTASE, CHLOROPLASTIC-RELATED-RELATED"/>
    <property type="match status" value="1"/>
</dbReference>
<dbReference type="Pfam" id="PF01118">
    <property type="entry name" value="Semialdhyde_dh"/>
    <property type="match status" value="1"/>
</dbReference>
<dbReference type="Pfam" id="PF22698">
    <property type="entry name" value="Semialdhyde_dhC_1"/>
    <property type="match status" value="1"/>
</dbReference>
<dbReference type="SMART" id="SM00859">
    <property type="entry name" value="Semialdhyde_dh"/>
    <property type="match status" value="1"/>
</dbReference>
<dbReference type="SUPFAM" id="SSF55347">
    <property type="entry name" value="Glyceraldehyde-3-phosphate dehydrogenase-like, C-terminal domain"/>
    <property type="match status" value="1"/>
</dbReference>
<dbReference type="SUPFAM" id="SSF51735">
    <property type="entry name" value="NAD(P)-binding Rossmann-fold domains"/>
    <property type="match status" value="1"/>
</dbReference>
<dbReference type="PROSITE" id="PS01224">
    <property type="entry name" value="ARGC"/>
    <property type="match status" value="1"/>
</dbReference>
<name>ARGC_XYLFA</name>
<proteinExistence type="inferred from homology"/>
<reference key="1">
    <citation type="journal article" date="2000" name="Nature">
        <title>The genome sequence of the plant pathogen Xylella fastidiosa.</title>
        <authorList>
            <person name="Simpson A.J.G."/>
            <person name="Reinach F.C."/>
            <person name="Arruda P."/>
            <person name="Abreu F.A."/>
            <person name="Acencio M."/>
            <person name="Alvarenga R."/>
            <person name="Alves L.M.C."/>
            <person name="Araya J.E."/>
            <person name="Baia G.S."/>
            <person name="Baptista C.S."/>
            <person name="Barros M.H."/>
            <person name="Bonaccorsi E.D."/>
            <person name="Bordin S."/>
            <person name="Bove J.M."/>
            <person name="Briones M.R.S."/>
            <person name="Bueno M.R.P."/>
            <person name="Camargo A.A."/>
            <person name="Camargo L.E.A."/>
            <person name="Carraro D.M."/>
            <person name="Carrer H."/>
            <person name="Colauto N.B."/>
            <person name="Colombo C."/>
            <person name="Costa F.F."/>
            <person name="Costa M.C.R."/>
            <person name="Costa-Neto C.M."/>
            <person name="Coutinho L.L."/>
            <person name="Cristofani M."/>
            <person name="Dias-Neto E."/>
            <person name="Docena C."/>
            <person name="El-Dorry H."/>
            <person name="Facincani A.P."/>
            <person name="Ferreira A.J.S."/>
            <person name="Ferreira V.C.A."/>
            <person name="Ferro J.A."/>
            <person name="Fraga J.S."/>
            <person name="Franca S.C."/>
            <person name="Franco M.C."/>
            <person name="Frohme M."/>
            <person name="Furlan L.R."/>
            <person name="Garnier M."/>
            <person name="Goldman G.H."/>
            <person name="Goldman M.H.S."/>
            <person name="Gomes S.L."/>
            <person name="Gruber A."/>
            <person name="Ho P.L."/>
            <person name="Hoheisel J.D."/>
            <person name="Junqueira M.L."/>
            <person name="Kemper E.L."/>
            <person name="Kitajima J.P."/>
            <person name="Krieger J.E."/>
            <person name="Kuramae E.E."/>
            <person name="Laigret F."/>
            <person name="Lambais M.R."/>
            <person name="Leite L.C.C."/>
            <person name="Lemos E.G.M."/>
            <person name="Lemos M.V.F."/>
            <person name="Lopes S.A."/>
            <person name="Lopes C.R."/>
            <person name="Machado J.A."/>
            <person name="Machado M.A."/>
            <person name="Madeira A.M.B.N."/>
            <person name="Madeira H.M.F."/>
            <person name="Marino C.L."/>
            <person name="Marques M.V."/>
            <person name="Martins E.A.L."/>
            <person name="Martins E.M.F."/>
            <person name="Matsukuma A.Y."/>
            <person name="Menck C.F.M."/>
            <person name="Miracca E.C."/>
            <person name="Miyaki C.Y."/>
            <person name="Monteiro-Vitorello C.B."/>
            <person name="Moon D.H."/>
            <person name="Nagai M.A."/>
            <person name="Nascimento A.L.T.O."/>
            <person name="Netto L.E.S."/>
            <person name="Nhani A. Jr."/>
            <person name="Nobrega F.G."/>
            <person name="Nunes L.R."/>
            <person name="Oliveira M.A."/>
            <person name="de Oliveira M.C."/>
            <person name="de Oliveira R.C."/>
            <person name="Palmieri D.A."/>
            <person name="Paris A."/>
            <person name="Peixoto B.R."/>
            <person name="Pereira G.A.G."/>
            <person name="Pereira H.A. Jr."/>
            <person name="Pesquero J.B."/>
            <person name="Quaggio R.B."/>
            <person name="Roberto P.G."/>
            <person name="Rodrigues V."/>
            <person name="de Rosa A.J.M."/>
            <person name="de Rosa V.E. Jr."/>
            <person name="de Sa R.G."/>
            <person name="Santelli R.V."/>
            <person name="Sawasaki H.E."/>
            <person name="da Silva A.C.R."/>
            <person name="da Silva A.M."/>
            <person name="da Silva F.R."/>
            <person name="Silva W.A. Jr."/>
            <person name="da Silveira J.F."/>
            <person name="Silvestri M.L.Z."/>
            <person name="Siqueira W.J."/>
            <person name="de Souza A.A."/>
            <person name="de Souza A.P."/>
            <person name="Terenzi M.F."/>
            <person name="Truffi D."/>
            <person name="Tsai S.M."/>
            <person name="Tsuhako M.H."/>
            <person name="Vallada H."/>
            <person name="Van Sluys M.A."/>
            <person name="Verjovski-Almeida S."/>
            <person name="Vettore A.L."/>
            <person name="Zago M.A."/>
            <person name="Zatz M."/>
            <person name="Meidanis J."/>
            <person name="Setubal J.C."/>
        </authorList>
    </citation>
    <scope>NUCLEOTIDE SEQUENCE [LARGE SCALE GENOMIC DNA]</scope>
    <source>
        <strain>9a5c</strain>
    </source>
</reference>
<keyword id="KW-0028">Amino-acid biosynthesis</keyword>
<keyword id="KW-0055">Arginine biosynthesis</keyword>
<keyword id="KW-0963">Cytoplasm</keyword>
<keyword id="KW-0521">NADP</keyword>
<keyword id="KW-0560">Oxidoreductase</keyword>
<sequence length="333" mass="36006">MSTATFTLGIVGARGYTGAALITLLTAHPAIELIFVSSREYHGQPVAAHNPTYRGDLRFETLDPAAVAAKRADVVILALPNGNAAPYVHAIDATAPPTLIIDLSADTRFDPDWYYGLPELTRHTYTGQKRISNPGCYATAMQLAIAPLRDQLAGPPQCFGVSGYSGAGTTPSDKNNQALLRDNLMPYALTDHLHEREVSAQLGIPVEFMPHVAPHFRGITLTANLWLQRPLTREHIKILYATRYANDPLIDIIDPPPWVNQIAARHTVQIGAFTMALGNKRVVVVATLDNLLKGAATQALQNLNRALGLDELTAIPYHPKPPTSPLPSSPLAS</sequence>
<feature type="chain" id="PRO_0000112478" description="N-acetyl-gamma-glutamyl-phosphate reductase">
    <location>
        <begin position="1"/>
        <end position="333"/>
    </location>
</feature>
<feature type="active site" evidence="1">
    <location>
        <position position="136"/>
    </location>
</feature>
<comment type="function">
    <text evidence="1">Catalyzes the NADPH-dependent reduction of N-acetyl-5-glutamyl phosphate to yield N-acetyl-L-glutamate 5-semialdehyde.</text>
</comment>
<comment type="catalytic activity">
    <reaction evidence="1">
        <text>N-acetyl-L-glutamate 5-semialdehyde + phosphate + NADP(+) = N-acetyl-L-glutamyl 5-phosphate + NADPH + H(+)</text>
        <dbReference type="Rhea" id="RHEA:21588"/>
        <dbReference type="ChEBI" id="CHEBI:15378"/>
        <dbReference type="ChEBI" id="CHEBI:29123"/>
        <dbReference type="ChEBI" id="CHEBI:43474"/>
        <dbReference type="ChEBI" id="CHEBI:57783"/>
        <dbReference type="ChEBI" id="CHEBI:57936"/>
        <dbReference type="ChEBI" id="CHEBI:58349"/>
        <dbReference type="EC" id="1.2.1.38"/>
    </reaction>
</comment>
<comment type="pathway">
    <text evidence="1">Amino-acid biosynthesis; L-arginine biosynthesis; N(2)-acetyl-L-ornithine from L-glutamate: step 3/4.</text>
</comment>
<comment type="subcellular location">
    <subcellularLocation>
        <location evidence="1">Cytoplasm</location>
    </subcellularLocation>
</comment>
<comment type="similarity">
    <text evidence="1">Belongs to the NAGSA dehydrogenase family. Type 1 subfamily.</text>
</comment>
<evidence type="ECO:0000255" key="1">
    <source>
        <dbReference type="HAMAP-Rule" id="MF_00150"/>
    </source>
</evidence>